<accession>Q5KZN0</accession>
<proteinExistence type="inferred from homology"/>
<sequence>MAKSFYRYLLRFRHGHQEDPVVRFANGAYEDHSFPKGSTDYEELSGYLELNGDYLESMVVFDELWEQFLHEA</sequence>
<organism>
    <name type="scientific">Geobacillus kaustophilus (strain HTA426)</name>
    <dbReference type="NCBI Taxonomy" id="235909"/>
    <lineage>
        <taxon>Bacteria</taxon>
        <taxon>Bacillati</taxon>
        <taxon>Bacillota</taxon>
        <taxon>Bacilli</taxon>
        <taxon>Bacillales</taxon>
        <taxon>Anoxybacillaceae</taxon>
        <taxon>Geobacillus</taxon>
        <taxon>Geobacillus thermoleovorans group</taxon>
    </lineage>
</organism>
<dbReference type="EMBL" id="BA000043">
    <property type="protein sequence ID" value="BAD75856.1"/>
    <property type="molecule type" value="Genomic_DNA"/>
</dbReference>
<dbReference type="RefSeq" id="WP_011231067.1">
    <property type="nucleotide sequence ID" value="NC_006510.1"/>
</dbReference>
<dbReference type="SMR" id="Q5KZN0"/>
<dbReference type="STRING" id="235909.GK1571"/>
<dbReference type="KEGG" id="gka:GK1571"/>
<dbReference type="eggNOG" id="COG4479">
    <property type="taxonomic scope" value="Bacteria"/>
</dbReference>
<dbReference type="HOGENOM" id="CLU_177534_1_0_9"/>
<dbReference type="Proteomes" id="UP000001172">
    <property type="component" value="Chromosome"/>
</dbReference>
<dbReference type="Gene3D" id="1.10.150.260">
    <property type="entry name" value="YozE SAM-like"/>
    <property type="match status" value="1"/>
</dbReference>
<dbReference type="HAMAP" id="MF_01538">
    <property type="entry name" value="UPF0346"/>
    <property type="match status" value="1"/>
</dbReference>
<dbReference type="InterPro" id="IPR010673">
    <property type="entry name" value="UPF0346"/>
</dbReference>
<dbReference type="InterPro" id="IPR023089">
    <property type="entry name" value="YozE_SAM-like"/>
</dbReference>
<dbReference type="InterPro" id="IPR036806">
    <property type="entry name" value="YozE_SAM-like_sf"/>
</dbReference>
<dbReference type="NCBIfam" id="NF010193">
    <property type="entry name" value="PRK13672.1"/>
    <property type="match status" value="1"/>
</dbReference>
<dbReference type="Pfam" id="PF06855">
    <property type="entry name" value="YozE_SAM_like"/>
    <property type="match status" value="1"/>
</dbReference>
<dbReference type="PIRSF" id="PIRSF037262">
    <property type="entry name" value="UCP037262"/>
    <property type="match status" value="1"/>
</dbReference>
<dbReference type="SUPFAM" id="SSF140652">
    <property type="entry name" value="YozE-like"/>
    <property type="match status" value="1"/>
</dbReference>
<gene>
    <name type="ordered locus">GK1571</name>
</gene>
<reference key="1">
    <citation type="journal article" date="2004" name="Nucleic Acids Res.">
        <title>Thermoadaptation trait revealed by the genome sequence of thermophilic Geobacillus kaustophilus.</title>
        <authorList>
            <person name="Takami H."/>
            <person name="Takaki Y."/>
            <person name="Chee G.-J."/>
            <person name="Nishi S."/>
            <person name="Shimamura S."/>
            <person name="Suzuki H."/>
            <person name="Matsui S."/>
            <person name="Uchiyama I."/>
        </authorList>
    </citation>
    <scope>NUCLEOTIDE SEQUENCE [LARGE SCALE GENOMIC DNA]</scope>
    <source>
        <strain>HTA426</strain>
    </source>
</reference>
<feature type="chain" id="PRO_0000164272" description="UPF0346 protein GK1571">
    <location>
        <begin position="1"/>
        <end position="72"/>
    </location>
</feature>
<comment type="similarity">
    <text evidence="1">Belongs to the UPF0346 family.</text>
</comment>
<name>Y1571_GEOKA</name>
<evidence type="ECO:0000255" key="1">
    <source>
        <dbReference type="HAMAP-Rule" id="MF_01538"/>
    </source>
</evidence>
<keyword id="KW-1185">Reference proteome</keyword>
<protein>
    <recommendedName>
        <fullName evidence="1">UPF0346 protein GK1571</fullName>
    </recommendedName>
</protein>